<proteinExistence type="evidence at protein level"/>
<reference key="1">
    <citation type="journal article" date="1991" name="FEBS Lett.">
        <title>Molecular cloning and sequence analysis of the cDNA encoding the human acrosin-trypsin inhibitor (HUSI-II).</title>
        <authorList>
            <person name="Moeritz A."/>
            <person name="Lilja H."/>
            <person name="Fink E."/>
        </authorList>
    </citation>
    <scope>NUCLEOTIDE SEQUENCE [MRNA]</scope>
</reference>
<reference key="2">
    <citation type="journal article" date="1993" name="Gene">
        <title>Organization and sequence of the gene encoding the human acrosin-trypsin inhibitor (HUSI-II).</title>
        <authorList>
            <person name="Moeritz A."/>
            <person name="Grzeschik K.H."/>
            <person name="Wingender E."/>
            <person name="Fink E."/>
        </authorList>
    </citation>
    <scope>NUCLEOTIDE SEQUENCE [GENOMIC DNA]</scope>
</reference>
<reference key="3">
    <citation type="journal article" date="2010" name="Mol. Cell. Proteomics">
        <title>Systematic mapping and functional analysis of a family of human epididymal secretory sperm-located proteins.</title>
        <authorList>
            <person name="Li J."/>
            <person name="Liu F."/>
            <person name="Wang H."/>
            <person name="Liu X."/>
            <person name="Liu J."/>
            <person name="Li N."/>
            <person name="Wan F."/>
            <person name="Wang W."/>
            <person name="Zhang C."/>
            <person name="Jin S."/>
            <person name="Liu J."/>
            <person name="Zhu P."/>
            <person name="Liu Y."/>
        </authorList>
    </citation>
    <scope>NUCLEOTIDE SEQUENCE [MRNA]</scope>
    <scope>TISSUE SPECIFICITY</scope>
    <source>
        <tissue>Epididymis</tissue>
    </source>
</reference>
<reference key="4">
    <citation type="journal article" date="2004" name="Nat. Genet.">
        <title>Complete sequencing and characterization of 21,243 full-length human cDNAs.</title>
        <authorList>
            <person name="Ota T."/>
            <person name="Suzuki Y."/>
            <person name="Nishikawa T."/>
            <person name="Otsuki T."/>
            <person name="Sugiyama T."/>
            <person name="Irie R."/>
            <person name="Wakamatsu A."/>
            <person name="Hayashi K."/>
            <person name="Sato H."/>
            <person name="Nagai K."/>
            <person name="Kimura K."/>
            <person name="Makita H."/>
            <person name="Sekine M."/>
            <person name="Obayashi M."/>
            <person name="Nishi T."/>
            <person name="Shibahara T."/>
            <person name="Tanaka T."/>
            <person name="Ishii S."/>
            <person name="Yamamoto J."/>
            <person name="Saito K."/>
            <person name="Kawai Y."/>
            <person name="Isono Y."/>
            <person name="Nakamura Y."/>
            <person name="Nagahari K."/>
            <person name="Murakami K."/>
            <person name="Yasuda T."/>
            <person name="Iwayanagi T."/>
            <person name="Wagatsuma M."/>
            <person name="Shiratori A."/>
            <person name="Sudo H."/>
            <person name="Hosoiri T."/>
            <person name="Kaku Y."/>
            <person name="Kodaira H."/>
            <person name="Kondo H."/>
            <person name="Sugawara M."/>
            <person name="Takahashi M."/>
            <person name="Kanda K."/>
            <person name="Yokoi T."/>
            <person name="Furuya T."/>
            <person name="Kikkawa E."/>
            <person name="Omura Y."/>
            <person name="Abe K."/>
            <person name="Kamihara K."/>
            <person name="Katsuta N."/>
            <person name="Sato K."/>
            <person name="Tanikawa M."/>
            <person name="Yamazaki M."/>
            <person name="Ninomiya K."/>
            <person name="Ishibashi T."/>
            <person name="Yamashita H."/>
            <person name="Murakawa K."/>
            <person name="Fujimori K."/>
            <person name="Tanai H."/>
            <person name="Kimata M."/>
            <person name="Watanabe M."/>
            <person name="Hiraoka S."/>
            <person name="Chiba Y."/>
            <person name="Ishida S."/>
            <person name="Ono Y."/>
            <person name="Takiguchi S."/>
            <person name="Watanabe S."/>
            <person name="Yosida M."/>
            <person name="Hotuta T."/>
            <person name="Kusano J."/>
            <person name="Kanehori K."/>
            <person name="Takahashi-Fujii A."/>
            <person name="Hara H."/>
            <person name="Tanase T.-O."/>
            <person name="Nomura Y."/>
            <person name="Togiya S."/>
            <person name="Komai F."/>
            <person name="Hara R."/>
            <person name="Takeuchi K."/>
            <person name="Arita M."/>
            <person name="Imose N."/>
            <person name="Musashino K."/>
            <person name="Yuuki H."/>
            <person name="Oshima A."/>
            <person name="Sasaki N."/>
            <person name="Aotsuka S."/>
            <person name="Yoshikawa Y."/>
            <person name="Matsunawa H."/>
            <person name="Ichihara T."/>
            <person name="Shiohata N."/>
            <person name="Sano S."/>
            <person name="Moriya S."/>
            <person name="Momiyama H."/>
            <person name="Satoh N."/>
            <person name="Takami S."/>
            <person name="Terashima Y."/>
            <person name="Suzuki O."/>
            <person name="Nakagawa S."/>
            <person name="Senoh A."/>
            <person name="Mizoguchi H."/>
            <person name="Goto Y."/>
            <person name="Shimizu F."/>
            <person name="Wakebe H."/>
            <person name="Hishigaki H."/>
            <person name="Watanabe T."/>
            <person name="Sugiyama A."/>
            <person name="Takemoto M."/>
            <person name="Kawakami B."/>
            <person name="Yamazaki M."/>
            <person name="Watanabe K."/>
            <person name="Kumagai A."/>
            <person name="Itakura S."/>
            <person name="Fukuzumi Y."/>
            <person name="Fujimori Y."/>
            <person name="Komiyama M."/>
            <person name="Tashiro H."/>
            <person name="Tanigami A."/>
            <person name="Fujiwara T."/>
            <person name="Ono T."/>
            <person name="Yamada K."/>
            <person name="Fujii Y."/>
            <person name="Ozaki K."/>
            <person name="Hirao M."/>
            <person name="Ohmori Y."/>
            <person name="Kawabata A."/>
            <person name="Hikiji T."/>
            <person name="Kobatake N."/>
            <person name="Inagaki H."/>
            <person name="Ikema Y."/>
            <person name="Okamoto S."/>
            <person name="Okitani R."/>
            <person name="Kawakami T."/>
            <person name="Noguchi S."/>
            <person name="Itoh T."/>
            <person name="Shigeta K."/>
            <person name="Senba T."/>
            <person name="Matsumura K."/>
            <person name="Nakajima Y."/>
            <person name="Mizuno T."/>
            <person name="Morinaga M."/>
            <person name="Sasaki M."/>
            <person name="Togashi T."/>
            <person name="Oyama M."/>
            <person name="Hata H."/>
            <person name="Watanabe M."/>
            <person name="Komatsu T."/>
            <person name="Mizushima-Sugano J."/>
            <person name="Satoh T."/>
            <person name="Shirai Y."/>
            <person name="Takahashi Y."/>
            <person name="Nakagawa K."/>
            <person name="Okumura K."/>
            <person name="Nagase T."/>
            <person name="Nomura N."/>
            <person name="Kikuchi H."/>
            <person name="Masuho Y."/>
            <person name="Yamashita R."/>
            <person name="Nakai K."/>
            <person name="Yada T."/>
            <person name="Nakamura Y."/>
            <person name="Ohara O."/>
            <person name="Isogai T."/>
            <person name="Sugano S."/>
        </authorList>
    </citation>
    <scope>NUCLEOTIDE SEQUENCE [LARGE SCALE MRNA]</scope>
    <source>
        <tissue>Testis</tissue>
    </source>
</reference>
<reference key="5">
    <citation type="submission" date="2004-06" db="EMBL/GenBank/DDBJ databases">
        <title>Cloning of human full open reading frames in Gateway(TM) system entry vector (pDONR201).</title>
        <authorList>
            <person name="Ebert L."/>
            <person name="Schick M."/>
            <person name="Neubert P."/>
            <person name="Schatten R."/>
            <person name="Henze S."/>
            <person name="Korn B."/>
        </authorList>
    </citation>
    <scope>NUCLEOTIDE SEQUENCE [LARGE SCALE MRNA]</scope>
</reference>
<reference key="6">
    <citation type="submission" date="2005-07" db="EMBL/GenBank/DDBJ databases">
        <authorList>
            <person name="Mural R.J."/>
            <person name="Istrail S."/>
            <person name="Sutton G.G."/>
            <person name="Florea L."/>
            <person name="Halpern A.L."/>
            <person name="Mobarry C.M."/>
            <person name="Lippert R."/>
            <person name="Walenz B."/>
            <person name="Shatkay H."/>
            <person name="Dew I."/>
            <person name="Miller J.R."/>
            <person name="Flanigan M.J."/>
            <person name="Edwards N.J."/>
            <person name="Bolanos R."/>
            <person name="Fasulo D."/>
            <person name="Halldorsson B.V."/>
            <person name="Hannenhalli S."/>
            <person name="Turner R."/>
            <person name="Yooseph S."/>
            <person name="Lu F."/>
            <person name="Nusskern D.R."/>
            <person name="Shue B.C."/>
            <person name="Zheng X.H."/>
            <person name="Zhong F."/>
            <person name="Delcher A.L."/>
            <person name="Huson D.H."/>
            <person name="Kravitz S.A."/>
            <person name="Mouchard L."/>
            <person name="Reinert K."/>
            <person name="Remington K.A."/>
            <person name="Clark A.G."/>
            <person name="Waterman M.S."/>
            <person name="Eichler E.E."/>
            <person name="Adams M.D."/>
            <person name="Hunkapiller M.W."/>
            <person name="Myers E.W."/>
            <person name="Venter J.C."/>
        </authorList>
    </citation>
    <scope>NUCLEOTIDE SEQUENCE [LARGE SCALE GENOMIC DNA]</scope>
</reference>
<reference key="7">
    <citation type="journal article" date="2004" name="Genome Res.">
        <title>The status, quality, and expansion of the NIH full-length cDNA project: the Mammalian Gene Collection (MGC).</title>
        <authorList>
            <consortium name="The MGC Project Team"/>
        </authorList>
    </citation>
    <scope>NUCLEOTIDE SEQUENCE [LARGE SCALE MRNA]</scope>
    <source>
        <tissue>Brain</tissue>
    </source>
</reference>
<reference key="8">
    <citation type="journal article" date="1990" name="FEBS Lett.">
        <title>Amino acid sequence elucidation of human acrosin-trypsin inhibitor (HUSI-II) reveals that Kazal-type proteinase inhibitors are structurally related to beta-subunits of glycoprotein hormones.</title>
        <authorList>
            <person name="Fink E."/>
            <person name="Hehlein-Fink C."/>
            <person name="Eulitz M."/>
        </authorList>
    </citation>
    <scope>PROTEIN SEQUENCE OF 24-84</scope>
    <scope>PYROGLUTAMATE FORMATION AT GLN-24</scope>
    <source>
        <tissue>Semen</tissue>
    </source>
</reference>
<reference key="9">
    <citation type="journal article" date="2009" name="Proteins">
        <title>Identification of trypsin-inhibitory site and structure determination of human SPINK2 serine proteinase inhibitor.</title>
        <authorList>
            <person name="Chen T."/>
            <person name="Lee T.-R."/>
            <person name="Liang W.-G."/>
            <person name="Chang W.-S."/>
            <person name="Lyu P.-C."/>
        </authorList>
    </citation>
    <scope>STRUCTURE BY NMR OF 23-84</scope>
    <scope>FUNCTION</scope>
    <scope>MUTAGENESIS OF PRO-45; ARG-46; HIS-47 AND PHE-48</scope>
    <scope>IDENTIFICATION BY MASS SPECTROMETRY</scope>
    <scope>DISULFIDE BONDS</scope>
</reference>
<reference key="10">
    <citation type="journal article" date="2017" name="EMBO Mol. Med.">
        <title>SPINK2 deficiency causes infertility by inducing sperm defects in heterozygotes and azoospermia in homozygotes.</title>
        <authorList>
            <person name="Kherraf Z.E."/>
            <person name="Christou-Kent M."/>
            <person name="Karaouzene T."/>
            <person name="Amiri-Yekta A."/>
            <person name="Martinez G."/>
            <person name="Vargas A.S."/>
            <person name="Lambert E."/>
            <person name="Borel C."/>
            <person name="Dorphin B."/>
            <person name="Aknin-Seifer I."/>
            <person name="Mitchell M.J."/>
            <person name="Metzler-Guillemain C."/>
            <person name="Escoffier J."/>
            <person name="Nef S."/>
            <person name="Grepillat M."/>
            <person name="Thierry-Mieg N."/>
            <person name="Satre V."/>
            <person name="Bailly M."/>
            <person name="Boitrelle F."/>
            <person name="Pernet-Gallay K."/>
            <person name="Hennebicq S."/>
            <person name="Faure J."/>
            <person name="Bottari S.P."/>
            <person name="Coutton C."/>
            <person name="Ray P.F."/>
            <person name="Arnoult C."/>
        </authorList>
    </citation>
    <scope>FUNCTION</scope>
    <scope>SUBCELLULAR LOCATION</scope>
    <scope>INVOLVEMENT IN SPGF29</scope>
</reference>
<dbReference type="EMBL" id="M91438">
    <property type="protein sequence ID" value="AAB59431.1"/>
    <property type="molecule type" value="Genomic_DNA"/>
</dbReference>
<dbReference type="EMBL" id="X57655">
    <property type="protein sequence ID" value="CAB37834.1"/>
    <property type="molecule type" value="mRNA"/>
</dbReference>
<dbReference type="EMBL" id="M84967">
    <property type="status" value="NOT_ANNOTATED_CDS"/>
    <property type="molecule type" value="Genomic_DNA"/>
</dbReference>
<dbReference type="EMBL" id="GU727622">
    <property type="protein sequence ID" value="ADU87624.1"/>
    <property type="molecule type" value="mRNA"/>
</dbReference>
<dbReference type="EMBL" id="AK312222">
    <property type="protein sequence ID" value="BAG35155.1"/>
    <property type="molecule type" value="mRNA"/>
</dbReference>
<dbReference type="EMBL" id="CR542135">
    <property type="protein sequence ID" value="CAG46932.1"/>
    <property type="molecule type" value="mRNA"/>
</dbReference>
<dbReference type="EMBL" id="CH471057">
    <property type="protein sequence ID" value="EAX05513.1"/>
    <property type="molecule type" value="Genomic_DNA"/>
</dbReference>
<dbReference type="EMBL" id="BC022514">
    <property type="protein sequence ID" value="AAH22514.1"/>
    <property type="molecule type" value="mRNA"/>
</dbReference>
<dbReference type="CCDS" id="CCDS3508.1"/>
<dbReference type="PIR" id="JU0152">
    <property type="entry name" value="JU0152"/>
</dbReference>
<dbReference type="RefSeq" id="NP_001258650.1">
    <property type="nucleotide sequence ID" value="NM_001271721.1"/>
</dbReference>
<dbReference type="RefSeq" id="NP_001258651.1">
    <property type="nucleotide sequence ID" value="NM_001271722.1"/>
</dbReference>
<dbReference type="RefSeq" id="NP_066937.1">
    <property type="nucleotide sequence ID" value="NM_021114.4"/>
</dbReference>
<dbReference type="PDB" id="2JXD">
    <property type="method" value="NMR"/>
    <property type="chains" value="A=23-84"/>
</dbReference>
<dbReference type="PDB" id="6KBR">
    <property type="method" value="X-ray"/>
    <property type="resolution" value="2.00 A"/>
    <property type="chains" value="C=23-84"/>
</dbReference>
<dbReference type="PDBsum" id="2JXD"/>
<dbReference type="PDBsum" id="6KBR"/>
<dbReference type="BMRB" id="P20155"/>
<dbReference type="SMR" id="P20155"/>
<dbReference type="BioGRID" id="112569">
    <property type="interactions" value="30"/>
</dbReference>
<dbReference type="FunCoup" id="P20155">
    <property type="interactions" value="45"/>
</dbReference>
<dbReference type="IntAct" id="P20155">
    <property type="interactions" value="30"/>
</dbReference>
<dbReference type="MEROPS" id="I01.012"/>
<dbReference type="GlyGen" id="P20155">
    <property type="glycosylation" value="1 site, 1 N-linked glycan (1 site)"/>
</dbReference>
<dbReference type="iPTMnet" id="P20155"/>
<dbReference type="PhosphoSitePlus" id="P20155"/>
<dbReference type="BioMuta" id="SPINK2"/>
<dbReference type="DMDM" id="123985"/>
<dbReference type="MassIVE" id="P20155"/>
<dbReference type="PeptideAtlas" id="P20155"/>
<dbReference type="ProteomicsDB" id="53731"/>
<dbReference type="Antibodypedia" id="12523">
    <property type="antibodies" value="40 antibodies from 17 providers"/>
</dbReference>
<dbReference type="DNASU" id="6691"/>
<dbReference type="Ensembl" id="ENST00000248701.8">
    <property type="protein sequence ID" value="ENSP00000248701.4"/>
    <property type="gene ID" value="ENSG00000128040.13"/>
</dbReference>
<dbReference type="GeneID" id="6691"/>
<dbReference type="KEGG" id="hsa:6691"/>
<dbReference type="UCSC" id="uc003hcg.3">
    <property type="organism name" value="human"/>
</dbReference>
<dbReference type="AGR" id="HGNC:11245"/>
<dbReference type="CTD" id="6691"/>
<dbReference type="DisGeNET" id="6691"/>
<dbReference type="GeneCards" id="SPINK2"/>
<dbReference type="HGNC" id="HGNC:11245">
    <property type="gene designation" value="SPINK2"/>
</dbReference>
<dbReference type="HPA" id="ENSG00000128040">
    <property type="expression patterns" value="Tissue enriched (epididymis)"/>
</dbReference>
<dbReference type="MalaCards" id="SPINK2"/>
<dbReference type="MIM" id="605753">
    <property type="type" value="gene"/>
</dbReference>
<dbReference type="MIM" id="618091">
    <property type="type" value="phenotype"/>
</dbReference>
<dbReference type="neXtProt" id="NX_P20155"/>
<dbReference type="OpenTargets" id="ENSG00000128040"/>
<dbReference type="PharmGKB" id="PA36075"/>
<dbReference type="VEuPathDB" id="HostDB:ENSG00000128040"/>
<dbReference type="GeneTree" id="ENSGT00530000064285"/>
<dbReference type="HOGENOM" id="CLU_169765_2_0_1"/>
<dbReference type="InParanoid" id="P20155"/>
<dbReference type="OrthoDB" id="126772at2759"/>
<dbReference type="PAN-GO" id="P20155">
    <property type="GO annotations" value="1 GO annotation based on evolutionary models"/>
</dbReference>
<dbReference type="PhylomeDB" id="P20155"/>
<dbReference type="PathwayCommons" id="P20155"/>
<dbReference type="SignaLink" id="P20155"/>
<dbReference type="BioGRID-ORCS" id="6691">
    <property type="hits" value="12 hits in 1145 CRISPR screens"/>
</dbReference>
<dbReference type="EvolutionaryTrace" id="P20155"/>
<dbReference type="GeneWiki" id="SPINK2"/>
<dbReference type="GenomeRNAi" id="6691"/>
<dbReference type="Pharos" id="P20155">
    <property type="development level" value="Tdark"/>
</dbReference>
<dbReference type="PRO" id="PR:P20155"/>
<dbReference type="Proteomes" id="UP000005640">
    <property type="component" value="Chromosome 4"/>
</dbReference>
<dbReference type="RNAct" id="P20155">
    <property type="molecule type" value="protein"/>
</dbReference>
<dbReference type="Bgee" id="ENSG00000128040">
    <property type="expression patterns" value="Expressed in corpus epididymis and 109 other cell types or tissues"/>
</dbReference>
<dbReference type="ExpressionAtlas" id="P20155">
    <property type="expression patterns" value="baseline and differential"/>
</dbReference>
<dbReference type="GO" id="GO:0001669">
    <property type="term" value="C:acrosomal vesicle"/>
    <property type="evidence" value="ECO:0000314"/>
    <property type="project" value="UniProtKB"/>
</dbReference>
<dbReference type="GO" id="GO:0005576">
    <property type="term" value="C:extracellular region"/>
    <property type="evidence" value="ECO:0007669"/>
    <property type="project" value="UniProtKB-SubCell"/>
</dbReference>
<dbReference type="GO" id="GO:0004866">
    <property type="term" value="F:endopeptidase inhibitor activity"/>
    <property type="evidence" value="ECO:0000304"/>
    <property type="project" value="ProtInc"/>
</dbReference>
<dbReference type="GO" id="GO:0004867">
    <property type="term" value="F:serine-type endopeptidase inhibitor activity"/>
    <property type="evidence" value="ECO:0007669"/>
    <property type="project" value="UniProtKB-KW"/>
</dbReference>
<dbReference type="GO" id="GO:0001675">
    <property type="term" value="P:acrosome assembly"/>
    <property type="evidence" value="ECO:0000250"/>
    <property type="project" value="UniProtKB"/>
</dbReference>
<dbReference type="GO" id="GO:0007286">
    <property type="term" value="P:spermatid development"/>
    <property type="evidence" value="ECO:0000315"/>
    <property type="project" value="UniProtKB"/>
</dbReference>
<dbReference type="FunFam" id="3.30.60.30:FF:000031">
    <property type="entry name" value="Serine protease inhibitor Kazal-type 2"/>
    <property type="match status" value="1"/>
</dbReference>
<dbReference type="Gene3D" id="3.30.60.30">
    <property type="match status" value="1"/>
</dbReference>
<dbReference type="InterPro" id="IPR002350">
    <property type="entry name" value="Kazal_dom"/>
</dbReference>
<dbReference type="InterPro" id="IPR036058">
    <property type="entry name" value="Kazal_dom_sf"/>
</dbReference>
<dbReference type="InterPro" id="IPR042167">
    <property type="entry name" value="SPINK2"/>
</dbReference>
<dbReference type="PANTHER" id="PTHR47608:SF1">
    <property type="entry name" value="SERINE PROTEASE INHIBITOR KAZAL-TYPE 2"/>
    <property type="match status" value="1"/>
</dbReference>
<dbReference type="PANTHER" id="PTHR47608">
    <property type="entry name" value="SERINE PROTEASE INHIBITOR KAZAL-TYPE 2, SPINK2"/>
    <property type="match status" value="1"/>
</dbReference>
<dbReference type="Pfam" id="PF00050">
    <property type="entry name" value="Kazal_1"/>
    <property type="match status" value="1"/>
</dbReference>
<dbReference type="SMART" id="SM00280">
    <property type="entry name" value="KAZAL"/>
    <property type="match status" value="1"/>
</dbReference>
<dbReference type="SUPFAM" id="SSF100895">
    <property type="entry name" value="Kazal-type serine protease inhibitors"/>
    <property type="match status" value="1"/>
</dbReference>
<dbReference type="PROSITE" id="PS00282">
    <property type="entry name" value="KAZAL_1"/>
    <property type="match status" value="1"/>
</dbReference>
<dbReference type="PROSITE" id="PS51465">
    <property type="entry name" value="KAZAL_2"/>
    <property type="match status" value="1"/>
</dbReference>
<gene>
    <name type="primary">SPINK2</name>
</gene>
<evidence type="ECO:0000250" key="1">
    <source>
        <dbReference type="UniProtKB" id="Q8BMY7"/>
    </source>
</evidence>
<evidence type="ECO:0000255" key="2">
    <source>
        <dbReference type="PROSITE-ProRule" id="PRU00798"/>
    </source>
</evidence>
<evidence type="ECO:0000269" key="3">
    <source>
    </source>
</evidence>
<evidence type="ECO:0000269" key="4">
    <source>
    </source>
</evidence>
<evidence type="ECO:0000269" key="5">
    <source>
    </source>
</evidence>
<evidence type="ECO:0000269" key="6">
    <source>
    </source>
</evidence>
<evidence type="ECO:0000305" key="7"/>
<evidence type="ECO:0007829" key="8">
    <source>
        <dbReference type="PDB" id="2JXD"/>
    </source>
</evidence>
<evidence type="ECO:0007829" key="9">
    <source>
        <dbReference type="PDB" id="6KBR"/>
    </source>
</evidence>
<accession>P20155</accession>
<accession>Q6FGH2</accession>
<sequence length="84" mass="9291">MALSVLRLALLLLAVTFAASLIPQFGLFSKYRTPNCSQYRLPGCPRHFNPVCGSDMSTYANECTLCMKIREGGHNIKIIRNGPC</sequence>
<name>ISK2_HUMAN</name>
<keyword id="KW-0002">3D-structure</keyword>
<keyword id="KW-0968">Cytoplasmic vesicle</keyword>
<keyword id="KW-0903">Direct protein sequencing</keyword>
<keyword id="KW-1015">Disulfide bond</keyword>
<keyword id="KW-0646">Protease inhibitor</keyword>
<keyword id="KW-1267">Proteomics identification</keyword>
<keyword id="KW-0873">Pyrrolidone carboxylic acid</keyword>
<keyword id="KW-1185">Reference proteome</keyword>
<keyword id="KW-0964">Secreted</keyword>
<keyword id="KW-0722">Serine protease inhibitor</keyword>
<keyword id="KW-0732">Signal</keyword>
<comment type="function">
    <text evidence="1 3 6">As a strong inhibitor of acrosin, it is required for normal spermiogenesis. It probably hinders premature activation of proacrosin and other proteases, thus preventing the cascade of events leading to spermiogenesis defects (PubMed:28554943). May be involved in the regulation of serine protease-dependent germ cell apoptosis (By similarity). It also inhibits trypsin.</text>
</comment>
<comment type="interaction">
    <interactant intactId="EBI-10200479">
        <id>P20155</id>
    </interactant>
    <interactant intactId="EBI-10173507">
        <id>Q6UY14-3</id>
        <label>ADAMTSL4</label>
    </interactant>
    <organismsDiffer>false</organismsDiffer>
    <experiments>3</experiments>
</comment>
<comment type="interaction">
    <interactant intactId="EBI-10200479">
        <id>P20155</id>
    </interactant>
    <interactant intactId="EBI-747754">
        <id>P28799</id>
        <label>GRN</label>
    </interactant>
    <organismsDiffer>false</organismsDiffer>
    <experiments>3</experiments>
</comment>
<comment type="interaction">
    <interactant intactId="EBI-10200479">
        <id>P20155</id>
    </interactant>
    <interactant intactId="EBI-10224152">
        <id>Q9Y5K2</id>
        <label>KLK4</label>
    </interactant>
    <organismsDiffer>false</organismsDiffer>
    <experiments>4</experiments>
</comment>
<comment type="interaction">
    <interactant intactId="EBI-10200479">
        <id>P20155</id>
    </interactant>
    <interactant intactId="EBI-3958099">
        <id>P26371</id>
        <label>KRTAP5-9</label>
    </interactant>
    <organismsDiffer>false</organismsDiffer>
    <experiments>3</experiments>
</comment>
<comment type="interaction">
    <interactant intactId="EBI-10200479">
        <id>P20155</id>
    </interactant>
    <interactant intactId="EBI-945833">
        <id>Q7Z3S9</id>
        <label>NOTCH2NLA</label>
    </interactant>
    <organismsDiffer>false</organismsDiffer>
    <experiments>3</experiments>
</comment>
<comment type="interaction">
    <interactant intactId="EBI-10200479">
        <id>P20155</id>
    </interactant>
    <interactant intactId="EBI-25504187">
        <id>P49788</id>
        <label>RARRES1</label>
    </interactant>
    <organismsDiffer>false</organismsDiffer>
    <experiments>5</experiments>
</comment>
<comment type="interaction">
    <interactant intactId="EBI-10200479">
        <id>P20155</id>
    </interactant>
    <interactant intactId="EBI-720609">
        <id>O76024</id>
        <label>WFS1</label>
    </interactant>
    <organismsDiffer>false</organismsDiffer>
    <experiments>3</experiments>
</comment>
<comment type="subcellular location">
    <subcellularLocation>
        <location evidence="7">Secreted</location>
    </subcellularLocation>
    <subcellularLocation>
        <location evidence="6">Cytoplasmic vesicle</location>
        <location evidence="6">Secretory vesicle</location>
        <location evidence="6">Acrosome</location>
    </subcellularLocation>
</comment>
<comment type="tissue specificity">
    <text evidence="4">Expressed in epididymis (at protein level).</text>
</comment>
<comment type="disease" evidence="6">
    <disease id="DI-05313">
        <name>Spermatogenic failure 29</name>
        <acronym>SPGF29</acronym>
        <description>An autosomal recessive infertility disorder caused by spermatogenesis defects that result in non-obstructive azoospermia or oligozoospermia. When produced, spermatozoa are immotile and have abnormal morphology, primarily defects of the acrosome and head-neck junction.</description>
        <dbReference type="MIM" id="618091"/>
    </disease>
    <text>The disease is caused by variants affecting the gene represented in this entry.</text>
</comment>
<organism>
    <name type="scientific">Homo sapiens</name>
    <name type="common">Human</name>
    <dbReference type="NCBI Taxonomy" id="9606"/>
    <lineage>
        <taxon>Eukaryota</taxon>
        <taxon>Metazoa</taxon>
        <taxon>Chordata</taxon>
        <taxon>Craniata</taxon>
        <taxon>Vertebrata</taxon>
        <taxon>Euteleostomi</taxon>
        <taxon>Mammalia</taxon>
        <taxon>Eutheria</taxon>
        <taxon>Euarchontoglires</taxon>
        <taxon>Primates</taxon>
        <taxon>Haplorrhini</taxon>
        <taxon>Catarrhini</taxon>
        <taxon>Hominidae</taxon>
        <taxon>Homo</taxon>
    </lineage>
</organism>
<feature type="signal peptide" evidence="5">
    <location>
        <begin position="1"/>
        <end position="23"/>
    </location>
</feature>
<feature type="chain" id="PRO_0000016561" description="Serine protease inhibitor Kazal-type 2">
    <location>
        <begin position="24"/>
        <end position="84"/>
    </location>
</feature>
<feature type="domain" description="Kazal-like" evidence="2">
    <location>
        <begin position="30"/>
        <end position="84"/>
    </location>
</feature>
<feature type="site" description="Reactive bond">
    <location>
        <begin position="46"/>
        <end position="47"/>
    </location>
</feature>
<feature type="modified residue" description="Pyrrolidone carboxylic acid" evidence="5">
    <location>
        <position position="24"/>
    </location>
</feature>
<feature type="disulfide bond" evidence="2 3">
    <location>
        <begin position="36"/>
        <end position="66"/>
    </location>
</feature>
<feature type="disulfide bond" evidence="2 3">
    <location>
        <begin position="44"/>
        <end position="63"/>
    </location>
</feature>
<feature type="disulfide bond" evidence="2 3">
    <location>
        <begin position="52"/>
        <end position="84"/>
    </location>
</feature>
<feature type="mutagenesis site" description="No effect on inhibitory activity towards trypsin." evidence="3">
    <original>P</original>
    <variation>A</variation>
    <location>
        <position position="45"/>
    </location>
</feature>
<feature type="mutagenesis site" description="Loss of inhibitory activity towards trypsin." evidence="3">
    <original>R</original>
    <variation>A</variation>
    <location>
        <position position="46"/>
    </location>
</feature>
<feature type="mutagenesis site" description="Reduces inhibitory activity towards trypsin." evidence="3">
    <original>H</original>
    <variation>A</variation>
    <location>
        <position position="47"/>
    </location>
</feature>
<feature type="mutagenesis site" description="Reduces inhibitory activity towards trypsin." evidence="3">
    <original>F</original>
    <variation>A</variation>
    <location>
        <position position="48"/>
    </location>
</feature>
<feature type="strand" evidence="8">
    <location>
        <begin position="27"/>
        <end position="32"/>
    </location>
</feature>
<feature type="helix" evidence="9">
    <location>
        <begin position="36"/>
        <end position="38"/>
    </location>
</feature>
<feature type="strand" evidence="9">
    <location>
        <begin position="51"/>
        <end position="53"/>
    </location>
</feature>
<feature type="strand" evidence="9">
    <location>
        <begin position="58"/>
        <end position="61"/>
    </location>
</feature>
<feature type="helix" evidence="9">
    <location>
        <begin position="62"/>
        <end position="72"/>
    </location>
</feature>
<feature type="strand" evidence="8">
    <location>
        <begin position="73"/>
        <end position="75"/>
    </location>
</feature>
<feature type="strand" evidence="9">
    <location>
        <begin position="78"/>
        <end position="83"/>
    </location>
</feature>
<protein>
    <recommendedName>
        <fullName>Serine protease inhibitor Kazal-type 2</fullName>
    </recommendedName>
    <alternativeName>
        <fullName>Acrosin-trypsin inhibitor</fullName>
    </alternativeName>
    <alternativeName>
        <fullName>Epididymis tissue protein Li 172</fullName>
    </alternativeName>
    <alternativeName>
        <fullName>HUSI-II</fullName>
    </alternativeName>
</protein>